<keyword id="KW-0028">Amino-acid biosynthesis</keyword>
<keyword id="KW-0100">Branched-chain amino acid biosynthesis</keyword>
<keyword id="KW-0963">Cytoplasm</keyword>
<keyword id="KW-0432">Leucine biosynthesis</keyword>
<keyword id="KW-0464">Manganese</keyword>
<keyword id="KW-0479">Metal-binding</keyword>
<keyword id="KW-0808">Transferase</keyword>
<accession>A7ZES2</accession>
<sequence length="504" mass="54341">MDKNKIIIFDTTLRDGEQSPGASMNTAEKLQIALQLERLGVDVMEAGFAAASPGDFDAVNQIAKQASNITVCSLARAVERDIKAAGEALAPAKNKRIHTFIATSPIHMQYKLKMSPDEVIRCAVEAVQYSKTFCDDVEFSCEDACRSEMSFLKEICEAAINAGAKTINIPDTVGYLYPEEITARISEIVKFIGDRAVVSVHNHNDLGMATANSLAAIKAGARQVEGTINGIGERAGNAALEEIVMAIKTRQDVFAPLYTGIISKEIYPTSRLIASITGIEPQPNKAIVGKNAFAHESGIHQDGVLKHKETYEIISAESIGLEKNSLVLGKHSGRHAFKDKLASLGFDLDSDALNKAFEKFKDLADKKKEIFDDDIRALVAEEITKIPQAYEITDLLQSSGGSLASASMSIRHNDEIVSDSALGNGTADAIFKVVDRISGINGTLKDYKVTAVSQGKDALAKVDVKVEFEGKTAVMGHGLDIDTMMASAKAYVGALNSYLRIHKN</sequence>
<gene>
    <name evidence="1" type="primary">leuA</name>
    <name type="ordered locus">Ccon26_14340</name>
    <name type="ORF">CCC13826_0438</name>
</gene>
<protein>
    <recommendedName>
        <fullName evidence="1">2-isopropylmalate synthase</fullName>
        <ecNumber evidence="1">2.3.3.13</ecNumber>
    </recommendedName>
    <alternativeName>
        <fullName evidence="1">Alpha-IPM synthase</fullName>
    </alternativeName>
    <alternativeName>
        <fullName evidence="1">Alpha-isopropylmalate synthase</fullName>
    </alternativeName>
</protein>
<organism>
    <name type="scientific">Campylobacter concisus (strain 13826)</name>
    <dbReference type="NCBI Taxonomy" id="360104"/>
    <lineage>
        <taxon>Bacteria</taxon>
        <taxon>Pseudomonadati</taxon>
        <taxon>Campylobacterota</taxon>
        <taxon>Epsilonproteobacteria</taxon>
        <taxon>Campylobacterales</taxon>
        <taxon>Campylobacteraceae</taxon>
        <taxon>Campylobacter</taxon>
    </lineage>
</organism>
<comment type="function">
    <text evidence="1">Catalyzes the condensation of the acetyl group of acetyl-CoA with 3-methyl-2-oxobutanoate (2-ketoisovalerate) to form 3-carboxy-3-hydroxy-4-methylpentanoate (2-isopropylmalate).</text>
</comment>
<comment type="catalytic activity">
    <reaction evidence="1">
        <text>3-methyl-2-oxobutanoate + acetyl-CoA + H2O = (2S)-2-isopropylmalate + CoA + H(+)</text>
        <dbReference type="Rhea" id="RHEA:21524"/>
        <dbReference type="ChEBI" id="CHEBI:1178"/>
        <dbReference type="ChEBI" id="CHEBI:11851"/>
        <dbReference type="ChEBI" id="CHEBI:15377"/>
        <dbReference type="ChEBI" id="CHEBI:15378"/>
        <dbReference type="ChEBI" id="CHEBI:57287"/>
        <dbReference type="ChEBI" id="CHEBI:57288"/>
        <dbReference type="EC" id="2.3.3.13"/>
    </reaction>
</comment>
<comment type="cofactor">
    <cofactor evidence="1">
        <name>Mn(2+)</name>
        <dbReference type="ChEBI" id="CHEBI:29035"/>
    </cofactor>
</comment>
<comment type="pathway">
    <text evidence="1">Amino-acid biosynthesis; L-leucine biosynthesis; L-leucine from 3-methyl-2-oxobutanoate: step 1/4.</text>
</comment>
<comment type="subunit">
    <text evidence="1">Homodimer.</text>
</comment>
<comment type="subcellular location">
    <subcellularLocation>
        <location evidence="1">Cytoplasm</location>
    </subcellularLocation>
</comment>
<comment type="similarity">
    <text evidence="1">Belongs to the alpha-IPM synthase/homocitrate synthase family. LeuA type 1 subfamily.</text>
</comment>
<dbReference type="EC" id="2.3.3.13" evidence="1"/>
<dbReference type="EMBL" id="CP000792">
    <property type="protein sequence ID" value="EAT99359.1"/>
    <property type="molecule type" value="Genomic_DNA"/>
</dbReference>
<dbReference type="RefSeq" id="WP_012140174.1">
    <property type="nucleotide sequence ID" value="NC_009802.2"/>
</dbReference>
<dbReference type="SMR" id="A7ZES2"/>
<dbReference type="STRING" id="360104.CCC13826_0438"/>
<dbReference type="KEGG" id="cco:CCC13826_0438"/>
<dbReference type="eggNOG" id="COG0119">
    <property type="taxonomic scope" value="Bacteria"/>
</dbReference>
<dbReference type="HOGENOM" id="CLU_022158_0_1_7"/>
<dbReference type="OrthoDB" id="9803573at2"/>
<dbReference type="UniPathway" id="UPA00048">
    <property type="reaction ID" value="UER00070"/>
</dbReference>
<dbReference type="Proteomes" id="UP000001121">
    <property type="component" value="Chromosome"/>
</dbReference>
<dbReference type="GO" id="GO:0005737">
    <property type="term" value="C:cytoplasm"/>
    <property type="evidence" value="ECO:0007669"/>
    <property type="project" value="UniProtKB-SubCell"/>
</dbReference>
<dbReference type="GO" id="GO:0003852">
    <property type="term" value="F:2-isopropylmalate synthase activity"/>
    <property type="evidence" value="ECO:0007669"/>
    <property type="project" value="UniProtKB-UniRule"/>
</dbReference>
<dbReference type="GO" id="GO:0003985">
    <property type="term" value="F:acetyl-CoA C-acetyltransferase activity"/>
    <property type="evidence" value="ECO:0007669"/>
    <property type="project" value="UniProtKB-UniRule"/>
</dbReference>
<dbReference type="GO" id="GO:0030145">
    <property type="term" value="F:manganese ion binding"/>
    <property type="evidence" value="ECO:0007669"/>
    <property type="project" value="UniProtKB-UniRule"/>
</dbReference>
<dbReference type="GO" id="GO:0009098">
    <property type="term" value="P:L-leucine biosynthetic process"/>
    <property type="evidence" value="ECO:0007669"/>
    <property type="project" value="UniProtKB-UniRule"/>
</dbReference>
<dbReference type="CDD" id="cd07940">
    <property type="entry name" value="DRE_TIM_IPMS"/>
    <property type="match status" value="1"/>
</dbReference>
<dbReference type="FunFam" id="1.10.238.260:FF:000001">
    <property type="entry name" value="2-isopropylmalate synthase"/>
    <property type="match status" value="1"/>
</dbReference>
<dbReference type="FunFam" id="3.20.20.70:FF:000010">
    <property type="entry name" value="2-isopropylmalate synthase"/>
    <property type="match status" value="1"/>
</dbReference>
<dbReference type="Gene3D" id="1.10.238.260">
    <property type="match status" value="1"/>
</dbReference>
<dbReference type="Gene3D" id="3.30.160.270">
    <property type="match status" value="1"/>
</dbReference>
<dbReference type="Gene3D" id="3.20.20.70">
    <property type="entry name" value="Aldolase class I"/>
    <property type="match status" value="1"/>
</dbReference>
<dbReference type="HAMAP" id="MF_01025">
    <property type="entry name" value="LeuA_type1"/>
    <property type="match status" value="1"/>
</dbReference>
<dbReference type="InterPro" id="IPR050073">
    <property type="entry name" value="2-IPM_HCS-like"/>
</dbReference>
<dbReference type="InterPro" id="IPR013709">
    <property type="entry name" value="2-isopropylmalate_synth_dimer"/>
</dbReference>
<dbReference type="InterPro" id="IPR002034">
    <property type="entry name" value="AIPM/Hcit_synth_CS"/>
</dbReference>
<dbReference type="InterPro" id="IPR013785">
    <property type="entry name" value="Aldolase_TIM"/>
</dbReference>
<dbReference type="InterPro" id="IPR054691">
    <property type="entry name" value="LeuA/HCS_post-cat"/>
</dbReference>
<dbReference type="InterPro" id="IPR036230">
    <property type="entry name" value="LeuA_allosteric_dom_sf"/>
</dbReference>
<dbReference type="InterPro" id="IPR005671">
    <property type="entry name" value="LeuA_bact_synth"/>
</dbReference>
<dbReference type="InterPro" id="IPR000891">
    <property type="entry name" value="PYR_CT"/>
</dbReference>
<dbReference type="NCBIfam" id="TIGR00973">
    <property type="entry name" value="leuA_bact"/>
    <property type="match status" value="1"/>
</dbReference>
<dbReference type="NCBIfam" id="NF002086">
    <property type="entry name" value="PRK00915.1-3"/>
    <property type="match status" value="1"/>
</dbReference>
<dbReference type="PANTHER" id="PTHR10277:SF9">
    <property type="entry name" value="2-ISOPROPYLMALATE SYNTHASE 1, CHLOROPLASTIC-RELATED"/>
    <property type="match status" value="1"/>
</dbReference>
<dbReference type="PANTHER" id="PTHR10277">
    <property type="entry name" value="HOMOCITRATE SYNTHASE-RELATED"/>
    <property type="match status" value="1"/>
</dbReference>
<dbReference type="Pfam" id="PF22617">
    <property type="entry name" value="HCS_D2"/>
    <property type="match status" value="1"/>
</dbReference>
<dbReference type="Pfam" id="PF00682">
    <property type="entry name" value="HMGL-like"/>
    <property type="match status" value="1"/>
</dbReference>
<dbReference type="Pfam" id="PF08502">
    <property type="entry name" value="LeuA_dimer"/>
    <property type="match status" value="1"/>
</dbReference>
<dbReference type="SMART" id="SM00917">
    <property type="entry name" value="LeuA_dimer"/>
    <property type="match status" value="1"/>
</dbReference>
<dbReference type="SUPFAM" id="SSF110921">
    <property type="entry name" value="2-isopropylmalate synthase LeuA, allosteric (dimerisation) domain"/>
    <property type="match status" value="1"/>
</dbReference>
<dbReference type="SUPFAM" id="SSF51569">
    <property type="entry name" value="Aldolase"/>
    <property type="match status" value="1"/>
</dbReference>
<dbReference type="PROSITE" id="PS00815">
    <property type="entry name" value="AIPM_HOMOCIT_SYNTH_1"/>
    <property type="match status" value="1"/>
</dbReference>
<dbReference type="PROSITE" id="PS00816">
    <property type="entry name" value="AIPM_HOMOCIT_SYNTH_2"/>
    <property type="match status" value="1"/>
</dbReference>
<dbReference type="PROSITE" id="PS50991">
    <property type="entry name" value="PYR_CT"/>
    <property type="match status" value="1"/>
</dbReference>
<reference key="1">
    <citation type="submission" date="2007-10" db="EMBL/GenBank/DDBJ databases">
        <title>Genome sequence of Campylobacter concisus 13826 isolated from human feces.</title>
        <authorList>
            <person name="Fouts D.E."/>
            <person name="Mongodin E.F."/>
            <person name="Puiu D."/>
            <person name="Sebastian Y."/>
            <person name="Miller W.G."/>
            <person name="Mandrell R.E."/>
            <person name="On S."/>
            <person name="Nelson K.E."/>
        </authorList>
    </citation>
    <scope>NUCLEOTIDE SEQUENCE [LARGE SCALE GENOMIC DNA]</scope>
    <source>
        <strain>13826</strain>
    </source>
</reference>
<evidence type="ECO:0000255" key="1">
    <source>
        <dbReference type="HAMAP-Rule" id="MF_01025"/>
    </source>
</evidence>
<name>LEU1_CAMC1</name>
<proteinExistence type="inferred from homology"/>
<feature type="chain" id="PRO_1000149158" description="2-isopropylmalate synthase">
    <location>
        <begin position="1"/>
        <end position="504"/>
    </location>
</feature>
<feature type="domain" description="Pyruvate carboxyltransferase" evidence="1">
    <location>
        <begin position="6"/>
        <end position="267"/>
    </location>
</feature>
<feature type="region of interest" description="Regulatory domain" evidence="1">
    <location>
        <begin position="391"/>
        <end position="504"/>
    </location>
</feature>
<feature type="binding site" evidence="1">
    <location>
        <position position="15"/>
    </location>
    <ligand>
        <name>Mn(2+)</name>
        <dbReference type="ChEBI" id="CHEBI:29035"/>
    </ligand>
</feature>
<feature type="binding site" evidence="1">
    <location>
        <position position="201"/>
    </location>
    <ligand>
        <name>Mn(2+)</name>
        <dbReference type="ChEBI" id="CHEBI:29035"/>
    </ligand>
</feature>
<feature type="binding site" evidence="1">
    <location>
        <position position="203"/>
    </location>
    <ligand>
        <name>Mn(2+)</name>
        <dbReference type="ChEBI" id="CHEBI:29035"/>
    </ligand>
</feature>
<feature type="binding site" evidence="1">
    <location>
        <position position="237"/>
    </location>
    <ligand>
        <name>Mn(2+)</name>
        <dbReference type="ChEBI" id="CHEBI:29035"/>
    </ligand>
</feature>